<keyword id="KW-0012">Acyltransferase</keyword>
<keyword id="KW-0963">Cytoplasm</keyword>
<keyword id="KW-0408">Iron</keyword>
<keyword id="KW-0479">Metal-binding</keyword>
<keyword id="KW-0808">Transferase</keyword>
<keyword id="KW-0819">tRNA processing</keyword>
<protein>
    <recommendedName>
        <fullName evidence="1">tRNA N6-adenosine threonylcarbamoyltransferase</fullName>
        <ecNumber evidence="1">2.3.1.234</ecNumber>
    </recommendedName>
    <alternativeName>
        <fullName evidence="1">N6-L-threonylcarbamoyladenine synthase</fullName>
        <shortName evidence="1">t(6)A synthase</shortName>
    </alternativeName>
    <alternativeName>
        <fullName evidence="1">t(6)A37 threonylcarbamoyladenosine biosynthesis protein TsaD</fullName>
    </alternativeName>
    <alternativeName>
        <fullName evidence="1">tRNA threonylcarbamoyladenosine biosynthesis protein TsaD</fullName>
    </alternativeName>
</protein>
<sequence>MTSVLALETSCDESAAALVWRDADGRFEVSSARIASQVEEHARWGGVVPEIASRRHVEALPGLIQQVLDESDSTLAEVDAIAATVTPGLAGALMVASVTGRTLSALRDRPFLAVHHLEGHLASVHLAEHRPQLPYLVLLVSGGHTELIRVEADGAMERLGRSHDDAAGEAFDKVARLLGLGYPGGPAIQAAAEGGDGRRFKLPKGRISLPEGGFHPYDFSFSGLKTAMLRTVEAQSGPLPTADLAASFEQVVVDVLVERSLRCAMDHGLEELVMVGGVAANRRLRQTLEQRSNAVGVRVSVAPLAYCTDNAAMIGAAALLRWDAGARGCSLRTGVSARWPLAQVDQLYTEQPAF</sequence>
<accession>Q7U573</accession>
<name>TSAD_PARMW</name>
<organism>
    <name type="scientific">Parasynechococcus marenigrum (strain WH8102)</name>
    <dbReference type="NCBI Taxonomy" id="84588"/>
    <lineage>
        <taxon>Bacteria</taxon>
        <taxon>Bacillati</taxon>
        <taxon>Cyanobacteriota</taxon>
        <taxon>Cyanophyceae</taxon>
        <taxon>Synechococcales</taxon>
        <taxon>Prochlorococcaceae</taxon>
        <taxon>Parasynechococcus</taxon>
        <taxon>Parasynechococcus marenigrum</taxon>
    </lineage>
</organism>
<reference key="1">
    <citation type="journal article" date="2003" name="Nature">
        <title>The genome of a motile marine Synechococcus.</title>
        <authorList>
            <person name="Palenik B."/>
            <person name="Brahamsha B."/>
            <person name="Larimer F.W."/>
            <person name="Land M.L."/>
            <person name="Hauser L."/>
            <person name="Chain P."/>
            <person name="Lamerdin J.E."/>
            <person name="Regala W."/>
            <person name="Allen E.E."/>
            <person name="McCarren J."/>
            <person name="Paulsen I.T."/>
            <person name="Dufresne A."/>
            <person name="Partensky F."/>
            <person name="Webb E.A."/>
            <person name="Waterbury J."/>
        </authorList>
    </citation>
    <scope>NUCLEOTIDE SEQUENCE [LARGE SCALE GENOMIC DNA]</scope>
    <source>
        <strain>WH8102</strain>
    </source>
</reference>
<evidence type="ECO:0000255" key="1">
    <source>
        <dbReference type="HAMAP-Rule" id="MF_01445"/>
    </source>
</evidence>
<dbReference type="EC" id="2.3.1.234" evidence="1"/>
<dbReference type="EMBL" id="BX569694">
    <property type="protein sequence ID" value="CAE08349.1"/>
    <property type="molecule type" value="Genomic_DNA"/>
</dbReference>
<dbReference type="RefSeq" id="WP_011128693.1">
    <property type="nucleotide sequence ID" value="NC_005070.1"/>
</dbReference>
<dbReference type="SMR" id="Q7U573"/>
<dbReference type="STRING" id="84588.SYNW1834"/>
<dbReference type="KEGG" id="syw:SYNW1834"/>
<dbReference type="eggNOG" id="COG0533">
    <property type="taxonomic scope" value="Bacteria"/>
</dbReference>
<dbReference type="HOGENOM" id="CLU_023208_0_2_3"/>
<dbReference type="Proteomes" id="UP000001422">
    <property type="component" value="Chromosome"/>
</dbReference>
<dbReference type="GO" id="GO:0005737">
    <property type="term" value="C:cytoplasm"/>
    <property type="evidence" value="ECO:0007669"/>
    <property type="project" value="UniProtKB-SubCell"/>
</dbReference>
<dbReference type="GO" id="GO:0005506">
    <property type="term" value="F:iron ion binding"/>
    <property type="evidence" value="ECO:0007669"/>
    <property type="project" value="UniProtKB-UniRule"/>
</dbReference>
<dbReference type="GO" id="GO:0061711">
    <property type="term" value="F:N(6)-L-threonylcarbamoyladenine synthase activity"/>
    <property type="evidence" value="ECO:0007669"/>
    <property type="project" value="UniProtKB-EC"/>
</dbReference>
<dbReference type="GO" id="GO:0002949">
    <property type="term" value="P:tRNA threonylcarbamoyladenosine modification"/>
    <property type="evidence" value="ECO:0007669"/>
    <property type="project" value="UniProtKB-UniRule"/>
</dbReference>
<dbReference type="CDD" id="cd24133">
    <property type="entry name" value="ASKHA_NBD_TsaD_bac"/>
    <property type="match status" value="1"/>
</dbReference>
<dbReference type="FunFam" id="3.30.420.40:FF:000040">
    <property type="entry name" value="tRNA N6-adenosine threonylcarbamoyltransferase"/>
    <property type="match status" value="1"/>
</dbReference>
<dbReference type="Gene3D" id="3.30.420.40">
    <property type="match status" value="2"/>
</dbReference>
<dbReference type="HAMAP" id="MF_01445">
    <property type="entry name" value="TsaD"/>
    <property type="match status" value="1"/>
</dbReference>
<dbReference type="InterPro" id="IPR043129">
    <property type="entry name" value="ATPase_NBD"/>
</dbReference>
<dbReference type="InterPro" id="IPR000905">
    <property type="entry name" value="Gcp-like_dom"/>
</dbReference>
<dbReference type="InterPro" id="IPR017861">
    <property type="entry name" value="KAE1/TsaD"/>
</dbReference>
<dbReference type="InterPro" id="IPR022450">
    <property type="entry name" value="TsaD"/>
</dbReference>
<dbReference type="NCBIfam" id="TIGR00329">
    <property type="entry name" value="gcp_kae1"/>
    <property type="match status" value="1"/>
</dbReference>
<dbReference type="NCBIfam" id="TIGR03723">
    <property type="entry name" value="T6A_TsaD_YgjD"/>
    <property type="match status" value="1"/>
</dbReference>
<dbReference type="PANTHER" id="PTHR11735">
    <property type="entry name" value="TRNA N6-ADENOSINE THREONYLCARBAMOYLTRANSFERASE"/>
    <property type="match status" value="1"/>
</dbReference>
<dbReference type="PANTHER" id="PTHR11735:SF6">
    <property type="entry name" value="TRNA N6-ADENOSINE THREONYLCARBAMOYLTRANSFERASE, MITOCHONDRIAL"/>
    <property type="match status" value="1"/>
</dbReference>
<dbReference type="Pfam" id="PF00814">
    <property type="entry name" value="TsaD"/>
    <property type="match status" value="1"/>
</dbReference>
<dbReference type="PRINTS" id="PR00789">
    <property type="entry name" value="OSIALOPTASE"/>
</dbReference>
<dbReference type="SUPFAM" id="SSF53067">
    <property type="entry name" value="Actin-like ATPase domain"/>
    <property type="match status" value="2"/>
</dbReference>
<gene>
    <name evidence="1" type="primary">tsaD</name>
    <name type="synonym">gcp</name>
    <name type="ordered locus">SYNW1834</name>
</gene>
<feature type="chain" id="PRO_0000303589" description="tRNA N6-adenosine threonylcarbamoyltransferase">
    <location>
        <begin position="1"/>
        <end position="354"/>
    </location>
</feature>
<feature type="binding site" evidence="1">
    <location>
        <position position="116"/>
    </location>
    <ligand>
        <name>Fe cation</name>
        <dbReference type="ChEBI" id="CHEBI:24875"/>
    </ligand>
</feature>
<feature type="binding site" evidence="1">
    <location>
        <position position="120"/>
    </location>
    <ligand>
        <name>Fe cation</name>
        <dbReference type="ChEBI" id="CHEBI:24875"/>
    </ligand>
</feature>
<feature type="binding site" evidence="1">
    <location>
        <begin position="139"/>
        <end position="143"/>
    </location>
    <ligand>
        <name>substrate</name>
    </ligand>
</feature>
<feature type="binding site" evidence="1">
    <location>
        <position position="172"/>
    </location>
    <ligand>
        <name>substrate</name>
    </ligand>
</feature>
<feature type="binding site" evidence="1">
    <location>
        <position position="185"/>
    </location>
    <ligand>
        <name>substrate</name>
    </ligand>
</feature>
<feature type="binding site" evidence="1">
    <location>
        <position position="281"/>
    </location>
    <ligand>
        <name>substrate</name>
    </ligand>
</feature>
<feature type="binding site" evidence="1">
    <location>
        <position position="309"/>
    </location>
    <ligand>
        <name>Fe cation</name>
        <dbReference type="ChEBI" id="CHEBI:24875"/>
    </ligand>
</feature>
<comment type="function">
    <text evidence="1">Required for the formation of a threonylcarbamoyl group on adenosine at position 37 (t(6)A37) in tRNAs that read codons beginning with adenine. Is involved in the transfer of the threonylcarbamoyl moiety of threonylcarbamoyl-AMP (TC-AMP) to the N6 group of A37, together with TsaE and TsaB. TsaD likely plays a direct catalytic role in this reaction.</text>
</comment>
<comment type="catalytic activity">
    <reaction evidence="1">
        <text>L-threonylcarbamoyladenylate + adenosine(37) in tRNA = N(6)-L-threonylcarbamoyladenosine(37) in tRNA + AMP + H(+)</text>
        <dbReference type="Rhea" id="RHEA:37059"/>
        <dbReference type="Rhea" id="RHEA-COMP:10162"/>
        <dbReference type="Rhea" id="RHEA-COMP:10163"/>
        <dbReference type="ChEBI" id="CHEBI:15378"/>
        <dbReference type="ChEBI" id="CHEBI:73682"/>
        <dbReference type="ChEBI" id="CHEBI:74411"/>
        <dbReference type="ChEBI" id="CHEBI:74418"/>
        <dbReference type="ChEBI" id="CHEBI:456215"/>
        <dbReference type="EC" id="2.3.1.234"/>
    </reaction>
</comment>
<comment type="cofactor">
    <cofactor evidence="1">
        <name>Fe(2+)</name>
        <dbReference type="ChEBI" id="CHEBI:29033"/>
    </cofactor>
    <text evidence="1">Binds 1 Fe(2+) ion per subunit.</text>
</comment>
<comment type="subcellular location">
    <subcellularLocation>
        <location evidence="1">Cytoplasm</location>
    </subcellularLocation>
</comment>
<comment type="similarity">
    <text evidence="1">Belongs to the KAE1 / TsaD family.</text>
</comment>
<proteinExistence type="inferred from homology"/>